<accession>Q4L7L5</accession>
<dbReference type="EC" id="6.3.5.-" evidence="1"/>
<dbReference type="EMBL" id="AP006716">
    <property type="protein sequence ID" value="BAE04360.1"/>
    <property type="molecule type" value="Genomic_DNA"/>
</dbReference>
<dbReference type="RefSeq" id="WP_011275356.1">
    <property type="nucleotide sequence ID" value="NC_007168.1"/>
</dbReference>
<dbReference type="SMR" id="Q4L7L5"/>
<dbReference type="GeneID" id="93780435"/>
<dbReference type="KEGG" id="sha:SH1051"/>
<dbReference type="eggNOG" id="COG0721">
    <property type="taxonomic scope" value="Bacteria"/>
</dbReference>
<dbReference type="HOGENOM" id="CLU_105899_1_2_9"/>
<dbReference type="OrthoDB" id="9813938at2"/>
<dbReference type="Proteomes" id="UP000000543">
    <property type="component" value="Chromosome"/>
</dbReference>
<dbReference type="GO" id="GO:0050566">
    <property type="term" value="F:asparaginyl-tRNA synthase (glutamine-hydrolyzing) activity"/>
    <property type="evidence" value="ECO:0007669"/>
    <property type="project" value="RHEA"/>
</dbReference>
<dbReference type="GO" id="GO:0005524">
    <property type="term" value="F:ATP binding"/>
    <property type="evidence" value="ECO:0007669"/>
    <property type="project" value="UniProtKB-KW"/>
</dbReference>
<dbReference type="GO" id="GO:0050567">
    <property type="term" value="F:glutaminyl-tRNA synthase (glutamine-hydrolyzing) activity"/>
    <property type="evidence" value="ECO:0007669"/>
    <property type="project" value="UniProtKB-UniRule"/>
</dbReference>
<dbReference type="GO" id="GO:0070681">
    <property type="term" value="P:glutaminyl-tRNAGln biosynthesis via transamidation"/>
    <property type="evidence" value="ECO:0007669"/>
    <property type="project" value="TreeGrafter"/>
</dbReference>
<dbReference type="GO" id="GO:0006450">
    <property type="term" value="P:regulation of translational fidelity"/>
    <property type="evidence" value="ECO:0007669"/>
    <property type="project" value="InterPro"/>
</dbReference>
<dbReference type="GO" id="GO:0006412">
    <property type="term" value="P:translation"/>
    <property type="evidence" value="ECO:0007669"/>
    <property type="project" value="UniProtKB-UniRule"/>
</dbReference>
<dbReference type="Gene3D" id="1.10.20.60">
    <property type="entry name" value="Glu-tRNAGln amidotransferase C subunit, N-terminal domain"/>
    <property type="match status" value="1"/>
</dbReference>
<dbReference type="HAMAP" id="MF_00122">
    <property type="entry name" value="GatC"/>
    <property type="match status" value="1"/>
</dbReference>
<dbReference type="InterPro" id="IPR036113">
    <property type="entry name" value="Asp/Glu-ADT_sf_sub_c"/>
</dbReference>
<dbReference type="InterPro" id="IPR003837">
    <property type="entry name" value="GatC"/>
</dbReference>
<dbReference type="NCBIfam" id="TIGR00135">
    <property type="entry name" value="gatC"/>
    <property type="match status" value="1"/>
</dbReference>
<dbReference type="PANTHER" id="PTHR15004">
    <property type="entry name" value="GLUTAMYL-TRNA(GLN) AMIDOTRANSFERASE SUBUNIT C, MITOCHONDRIAL"/>
    <property type="match status" value="1"/>
</dbReference>
<dbReference type="PANTHER" id="PTHR15004:SF0">
    <property type="entry name" value="GLUTAMYL-TRNA(GLN) AMIDOTRANSFERASE SUBUNIT C, MITOCHONDRIAL"/>
    <property type="match status" value="1"/>
</dbReference>
<dbReference type="Pfam" id="PF02686">
    <property type="entry name" value="GatC"/>
    <property type="match status" value="1"/>
</dbReference>
<dbReference type="SUPFAM" id="SSF141000">
    <property type="entry name" value="Glu-tRNAGln amidotransferase C subunit"/>
    <property type="match status" value="1"/>
</dbReference>
<feature type="chain" id="PRO_1000016218" description="Aspartyl/glutamyl-tRNA(Asn/Gln) amidotransferase subunit C">
    <location>
        <begin position="1"/>
        <end position="100"/>
    </location>
</feature>
<gene>
    <name evidence="1" type="primary">gatC</name>
    <name type="ordered locus">SH1051</name>
</gene>
<protein>
    <recommendedName>
        <fullName evidence="1">Aspartyl/glutamyl-tRNA(Asn/Gln) amidotransferase subunit C</fullName>
        <shortName evidence="1">Asp/Glu-ADT subunit C</shortName>
        <ecNumber evidence="1">6.3.5.-</ecNumber>
    </recommendedName>
</protein>
<evidence type="ECO:0000255" key="1">
    <source>
        <dbReference type="HAMAP-Rule" id="MF_00122"/>
    </source>
</evidence>
<proteinExistence type="inferred from homology"/>
<keyword id="KW-0067">ATP-binding</keyword>
<keyword id="KW-0436">Ligase</keyword>
<keyword id="KW-0547">Nucleotide-binding</keyword>
<keyword id="KW-0648">Protein biosynthesis</keyword>
<name>GATC_STAHJ</name>
<sequence>MTKVTREEVEHIAHLARLQISEEETEEMANTLESILDFAKQNDTADTEGIEPTYHVLDLQNVLRDDEAIEGIPQELALKNAKETENGQFKVPAIMNEEEA</sequence>
<organism>
    <name type="scientific">Staphylococcus haemolyticus (strain JCSC1435)</name>
    <dbReference type="NCBI Taxonomy" id="279808"/>
    <lineage>
        <taxon>Bacteria</taxon>
        <taxon>Bacillati</taxon>
        <taxon>Bacillota</taxon>
        <taxon>Bacilli</taxon>
        <taxon>Bacillales</taxon>
        <taxon>Staphylococcaceae</taxon>
        <taxon>Staphylococcus</taxon>
    </lineage>
</organism>
<reference key="1">
    <citation type="journal article" date="2005" name="J. Bacteriol.">
        <title>Whole-genome sequencing of Staphylococcus haemolyticus uncovers the extreme plasticity of its genome and the evolution of human-colonizing staphylococcal species.</title>
        <authorList>
            <person name="Takeuchi F."/>
            <person name="Watanabe S."/>
            <person name="Baba T."/>
            <person name="Yuzawa H."/>
            <person name="Ito T."/>
            <person name="Morimoto Y."/>
            <person name="Kuroda M."/>
            <person name="Cui L."/>
            <person name="Takahashi M."/>
            <person name="Ankai A."/>
            <person name="Baba S."/>
            <person name="Fukui S."/>
            <person name="Lee J.C."/>
            <person name="Hiramatsu K."/>
        </authorList>
    </citation>
    <scope>NUCLEOTIDE SEQUENCE [LARGE SCALE GENOMIC DNA]</scope>
    <source>
        <strain>JCSC1435</strain>
    </source>
</reference>
<comment type="function">
    <text evidence="1">Allows the formation of correctly charged Asn-tRNA(Asn) or Gln-tRNA(Gln) through the transamidation of misacylated Asp-tRNA(Asn) or Glu-tRNA(Gln) in organisms which lack either or both of asparaginyl-tRNA or glutaminyl-tRNA synthetases. The reaction takes place in the presence of glutamine and ATP through an activated phospho-Asp-tRNA(Asn) or phospho-Glu-tRNA(Gln).</text>
</comment>
<comment type="catalytic activity">
    <reaction evidence="1">
        <text>L-glutamyl-tRNA(Gln) + L-glutamine + ATP + H2O = L-glutaminyl-tRNA(Gln) + L-glutamate + ADP + phosphate + H(+)</text>
        <dbReference type="Rhea" id="RHEA:17521"/>
        <dbReference type="Rhea" id="RHEA-COMP:9681"/>
        <dbReference type="Rhea" id="RHEA-COMP:9684"/>
        <dbReference type="ChEBI" id="CHEBI:15377"/>
        <dbReference type="ChEBI" id="CHEBI:15378"/>
        <dbReference type="ChEBI" id="CHEBI:29985"/>
        <dbReference type="ChEBI" id="CHEBI:30616"/>
        <dbReference type="ChEBI" id="CHEBI:43474"/>
        <dbReference type="ChEBI" id="CHEBI:58359"/>
        <dbReference type="ChEBI" id="CHEBI:78520"/>
        <dbReference type="ChEBI" id="CHEBI:78521"/>
        <dbReference type="ChEBI" id="CHEBI:456216"/>
    </reaction>
</comment>
<comment type="catalytic activity">
    <reaction evidence="1">
        <text>L-aspartyl-tRNA(Asn) + L-glutamine + ATP + H2O = L-asparaginyl-tRNA(Asn) + L-glutamate + ADP + phosphate + 2 H(+)</text>
        <dbReference type="Rhea" id="RHEA:14513"/>
        <dbReference type="Rhea" id="RHEA-COMP:9674"/>
        <dbReference type="Rhea" id="RHEA-COMP:9677"/>
        <dbReference type="ChEBI" id="CHEBI:15377"/>
        <dbReference type="ChEBI" id="CHEBI:15378"/>
        <dbReference type="ChEBI" id="CHEBI:29985"/>
        <dbReference type="ChEBI" id="CHEBI:30616"/>
        <dbReference type="ChEBI" id="CHEBI:43474"/>
        <dbReference type="ChEBI" id="CHEBI:58359"/>
        <dbReference type="ChEBI" id="CHEBI:78515"/>
        <dbReference type="ChEBI" id="CHEBI:78516"/>
        <dbReference type="ChEBI" id="CHEBI:456216"/>
    </reaction>
</comment>
<comment type="subunit">
    <text evidence="1">Heterotrimer of A, B and C subunits.</text>
</comment>
<comment type="similarity">
    <text evidence="1">Belongs to the GatC family.</text>
</comment>